<protein>
    <recommendedName>
        <fullName evidence="1">Elongation factor G</fullName>
        <shortName evidence="1">EF-G</shortName>
    </recommendedName>
</protein>
<comment type="function">
    <text evidence="1">Catalyzes the GTP-dependent ribosomal translocation step during translation elongation. During this step, the ribosome changes from the pre-translocational (PRE) to the post-translocational (POST) state as the newly formed A-site-bound peptidyl-tRNA and P-site-bound deacylated tRNA move to the P and E sites, respectively. Catalyzes the coordinated movement of the two tRNA molecules, the mRNA and conformational changes in the ribosome.</text>
</comment>
<comment type="subcellular location">
    <subcellularLocation>
        <location evidence="1">Cytoplasm</location>
    </subcellularLocation>
</comment>
<comment type="similarity">
    <text evidence="1">Belongs to the TRAFAC class translation factor GTPase superfamily. Classic translation factor GTPase family. EF-G/EF-2 subfamily.</text>
</comment>
<feature type="chain" id="PRO_0000263420" description="Elongation factor G">
    <location>
        <begin position="1"/>
        <end position="699"/>
    </location>
</feature>
<feature type="domain" description="tr-type G">
    <location>
        <begin position="8"/>
        <end position="290"/>
    </location>
</feature>
<feature type="binding site" evidence="1">
    <location>
        <begin position="17"/>
        <end position="24"/>
    </location>
    <ligand>
        <name>GTP</name>
        <dbReference type="ChEBI" id="CHEBI:37565"/>
    </ligand>
</feature>
<feature type="binding site" evidence="1">
    <location>
        <begin position="88"/>
        <end position="92"/>
    </location>
    <ligand>
        <name>GTP</name>
        <dbReference type="ChEBI" id="CHEBI:37565"/>
    </ligand>
</feature>
<feature type="binding site" evidence="1">
    <location>
        <begin position="142"/>
        <end position="145"/>
    </location>
    <ligand>
        <name>GTP</name>
        <dbReference type="ChEBI" id="CHEBI:37565"/>
    </ligand>
</feature>
<keyword id="KW-0963">Cytoplasm</keyword>
<keyword id="KW-0251">Elongation factor</keyword>
<keyword id="KW-0342">GTP-binding</keyword>
<keyword id="KW-0547">Nucleotide-binding</keyword>
<keyword id="KW-0648">Protein biosynthesis</keyword>
<keyword id="KW-1185">Reference proteome</keyword>
<name>EFG_ALCBS</name>
<reference key="1">
    <citation type="journal article" date="2006" name="Nat. Biotechnol.">
        <title>Genome sequence of the ubiquitous hydrocarbon-degrading marine bacterium Alcanivorax borkumensis.</title>
        <authorList>
            <person name="Schneiker S."/>
            <person name="Martins dos Santos V.A.P."/>
            <person name="Bartels D."/>
            <person name="Bekel T."/>
            <person name="Brecht M."/>
            <person name="Buhrmester J."/>
            <person name="Chernikova T.N."/>
            <person name="Denaro R."/>
            <person name="Ferrer M."/>
            <person name="Gertler C."/>
            <person name="Goesmann A."/>
            <person name="Golyshina O.V."/>
            <person name="Kaminski F."/>
            <person name="Khachane A.N."/>
            <person name="Lang S."/>
            <person name="Linke B."/>
            <person name="McHardy A.C."/>
            <person name="Meyer F."/>
            <person name="Nechitaylo T."/>
            <person name="Puehler A."/>
            <person name="Regenhardt D."/>
            <person name="Rupp O."/>
            <person name="Sabirova J.S."/>
            <person name="Selbitschka W."/>
            <person name="Yakimov M.M."/>
            <person name="Timmis K.N."/>
            <person name="Vorhoelter F.-J."/>
            <person name="Weidner S."/>
            <person name="Kaiser O."/>
            <person name="Golyshin P.N."/>
        </authorList>
    </citation>
    <scope>NUCLEOTIDE SEQUENCE [LARGE SCALE GENOMIC DNA]</scope>
    <source>
        <strain>ATCC 700651 / DSM 11573 / NCIMB 13689 / SK2</strain>
    </source>
</reference>
<proteinExistence type="inferred from homology"/>
<gene>
    <name evidence="1" type="primary">fusA</name>
    <name type="ordered locus">ABO_0382</name>
</gene>
<dbReference type="EMBL" id="AM286690">
    <property type="protein sequence ID" value="CAL15830.1"/>
    <property type="molecule type" value="Genomic_DNA"/>
</dbReference>
<dbReference type="RefSeq" id="WP_011587677.1">
    <property type="nucleotide sequence ID" value="NC_008260.1"/>
</dbReference>
<dbReference type="SMR" id="Q0VSL8"/>
<dbReference type="STRING" id="393595.ABO_0382"/>
<dbReference type="KEGG" id="abo:ABO_0382"/>
<dbReference type="eggNOG" id="COG0480">
    <property type="taxonomic scope" value="Bacteria"/>
</dbReference>
<dbReference type="HOGENOM" id="CLU_002794_4_1_6"/>
<dbReference type="OrthoDB" id="9804431at2"/>
<dbReference type="Proteomes" id="UP000008871">
    <property type="component" value="Chromosome"/>
</dbReference>
<dbReference type="GO" id="GO:0005737">
    <property type="term" value="C:cytoplasm"/>
    <property type="evidence" value="ECO:0007669"/>
    <property type="project" value="UniProtKB-SubCell"/>
</dbReference>
<dbReference type="GO" id="GO:0005525">
    <property type="term" value="F:GTP binding"/>
    <property type="evidence" value="ECO:0007669"/>
    <property type="project" value="UniProtKB-UniRule"/>
</dbReference>
<dbReference type="GO" id="GO:0003924">
    <property type="term" value="F:GTPase activity"/>
    <property type="evidence" value="ECO:0007669"/>
    <property type="project" value="InterPro"/>
</dbReference>
<dbReference type="GO" id="GO:0097216">
    <property type="term" value="F:guanosine tetraphosphate binding"/>
    <property type="evidence" value="ECO:0007669"/>
    <property type="project" value="UniProtKB-ARBA"/>
</dbReference>
<dbReference type="GO" id="GO:0003746">
    <property type="term" value="F:translation elongation factor activity"/>
    <property type="evidence" value="ECO:0007669"/>
    <property type="project" value="UniProtKB-UniRule"/>
</dbReference>
<dbReference type="GO" id="GO:0032790">
    <property type="term" value="P:ribosome disassembly"/>
    <property type="evidence" value="ECO:0007669"/>
    <property type="project" value="TreeGrafter"/>
</dbReference>
<dbReference type="CDD" id="cd01886">
    <property type="entry name" value="EF-G"/>
    <property type="match status" value="1"/>
</dbReference>
<dbReference type="CDD" id="cd16262">
    <property type="entry name" value="EFG_III"/>
    <property type="match status" value="1"/>
</dbReference>
<dbReference type="CDD" id="cd01434">
    <property type="entry name" value="EFG_mtEFG1_IV"/>
    <property type="match status" value="1"/>
</dbReference>
<dbReference type="CDD" id="cd03713">
    <property type="entry name" value="EFG_mtEFG_C"/>
    <property type="match status" value="1"/>
</dbReference>
<dbReference type="CDD" id="cd04088">
    <property type="entry name" value="EFG_mtEFG_II"/>
    <property type="match status" value="1"/>
</dbReference>
<dbReference type="FunFam" id="2.40.30.10:FF:000006">
    <property type="entry name" value="Elongation factor G"/>
    <property type="match status" value="1"/>
</dbReference>
<dbReference type="FunFam" id="3.30.230.10:FF:000003">
    <property type="entry name" value="Elongation factor G"/>
    <property type="match status" value="1"/>
</dbReference>
<dbReference type="FunFam" id="3.30.70.240:FF:000001">
    <property type="entry name" value="Elongation factor G"/>
    <property type="match status" value="1"/>
</dbReference>
<dbReference type="FunFam" id="3.30.70.870:FF:000001">
    <property type="entry name" value="Elongation factor G"/>
    <property type="match status" value="1"/>
</dbReference>
<dbReference type="FunFam" id="3.40.50.300:FF:000029">
    <property type="entry name" value="Elongation factor G"/>
    <property type="match status" value="1"/>
</dbReference>
<dbReference type="Gene3D" id="3.30.230.10">
    <property type="match status" value="1"/>
</dbReference>
<dbReference type="Gene3D" id="3.30.70.240">
    <property type="match status" value="1"/>
</dbReference>
<dbReference type="Gene3D" id="3.30.70.870">
    <property type="entry name" value="Elongation Factor G (Translational Gtpase), domain 3"/>
    <property type="match status" value="1"/>
</dbReference>
<dbReference type="Gene3D" id="3.40.50.300">
    <property type="entry name" value="P-loop containing nucleotide triphosphate hydrolases"/>
    <property type="match status" value="1"/>
</dbReference>
<dbReference type="Gene3D" id="2.40.30.10">
    <property type="entry name" value="Translation factors"/>
    <property type="match status" value="1"/>
</dbReference>
<dbReference type="HAMAP" id="MF_00054_B">
    <property type="entry name" value="EF_G_EF_2_B"/>
    <property type="match status" value="1"/>
</dbReference>
<dbReference type="InterPro" id="IPR041095">
    <property type="entry name" value="EFG_II"/>
</dbReference>
<dbReference type="InterPro" id="IPR009022">
    <property type="entry name" value="EFG_III"/>
</dbReference>
<dbReference type="InterPro" id="IPR035647">
    <property type="entry name" value="EFG_III/V"/>
</dbReference>
<dbReference type="InterPro" id="IPR047872">
    <property type="entry name" value="EFG_IV"/>
</dbReference>
<dbReference type="InterPro" id="IPR035649">
    <property type="entry name" value="EFG_V"/>
</dbReference>
<dbReference type="InterPro" id="IPR000640">
    <property type="entry name" value="EFG_V-like"/>
</dbReference>
<dbReference type="InterPro" id="IPR004161">
    <property type="entry name" value="EFTu-like_2"/>
</dbReference>
<dbReference type="InterPro" id="IPR031157">
    <property type="entry name" value="G_TR_CS"/>
</dbReference>
<dbReference type="InterPro" id="IPR027417">
    <property type="entry name" value="P-loop_NTPase"/>
</dbReference>
<dbReference type="InterPro" id="IPR020568">
    <property type="entry name" value="Ribosomal_Su5_D2-typ_SF"/>
</dbReference>
<dbReference type="InterPro" id="IPR014721">
    <property type="entry name" value="Ribsml_uS5_D2-typ_fold_subgr"/>
</dbReference>
<dbReference type="InterPro" id="IPR005225">
    <property type="entry name" value="Small_GTP-bd"/>
</dbReference>
<dbReference type="InterPro" id="IPR000795">
    <property type="entry name" value="T_Tr_GTP-bd_dom"/>
</dbReference>
<dbReference type="InterPro" id="IPR009000">
    <property type="entry name" value="Transl_B-barrel_sf"/>
</dbReference>
<dbReference type="InterPro" id="IPR004540">
    <property type="entry name" value="Transl_elong_EFG/EF2"/>
</dbReference>
<dbReference type="InterPro" id="IPR005517">
    <property type="entry name" value="Transl_elong_EFG/EF2_IV"/>
</dbReference>
<dbReference type="NCBIfam" id="TIGR00484">
    <property type="entry name" value="EF-G"/>
    <property type="match status" value="1"/>
</dbReference>
<dbReference type="NCBIfam" id="NF009381">
    <property type="entry name" value="PRK12740.1-5"/>
    <property type="match status" value="1"/>
</dbReference>
<dbReference type="NCBIfam" id="TIGR00231">
    <property type="entry name" value="small_GTP"/>
    <property type="match status" value="1"/>
</dbReference>
<dbReference type="PANTHER" id="PTHR43261:SF1">
    <property type="entry name" value="RIBOSOME-RELEASING FACTOR 2, MITOCHONDRIAL"/>
    <property type="match status" value="1"/>
</dbReference>
<dbReference type="PANTHER" id="PTHR43261">
    <property type="entry name" value="TRANSLATION ELONGATION FACTOR G-RELATED"/>
    <property type="match status" value="1"/>
</dbReference>
<dbReference type="Pfam" id="PF00679">
    <property type="entry name" value="EFG_C"/>
    <property type="match status" value="1"/>
</dbReference>
<dbReference type="Pfam" id="PF14492">
    <property type="entry name" value="EFG_III"/>
    <property type="match status" value="1"/>
</dbReference>
<dbReference type="Pfam" id="PF03764">
    <property type="entry name" value="EFG_IV"/>
    <property type="match status" value="1"/>
</dbReference>
<dbReference type="Pfam" id="PF00009">
    <property type="entry name" value="GTP_EFTU"/>
    <property type="match status" value="1"/>
</dbReference>
<dbReference type="Pfam" id="PF03144">
    <property type="entry name" value="GTP_EFTU_D2"/>
    <property type="match status" value="1"/>
</dbReference>
<dbReference type="PRINTS" id="PR00315">
    <property type="entry name" value="ELONGATNFCT"/>
</dbReference>
<dbReference type="SMART" id="SM00838">
    <property type="entry name" value="EFG_C"/>
    <property type="match status" value="1"/>
</dbReference>
<dbReference type="SMART" id="SM00889">
    <property type="entry name" value="EFG_IV"/>
    <property type="match status" value="1"/>
</dbReference>
<dbReference type="SUPFAM" id="SSF54980">
    <property type="entry name" value="EF-G C-terminal domain-like"/>
    <property type="match status" value="2"/>
</dbReference>
<dbReference type="SUPFAM" id="SSF52540">
    <property type="entry name" value="P-loop containing nucleoside triphosphate hydrolases"/>
    <property type="match status" value="1"/>
</dbReference>
<dbReference type="SUPFAM" id="SSF54211">
    <property type="entry name" value="Ribosomal protein S5 domain 2-like"/>
    <property type="match status" value="1"/>
</dbReference>
<dbReference type="SUPFAM" id="SSF50447">
    <property type="entry name" value="Translation proteins"/>
    <property type="match status" value="1"/>
</dbReference>
<dbReference type="PROSITE" id="PS00301">
    <property type="entry name" value="G_TR_1"/>
    <property type="match status" value="1"/>
</dbReference>
<dbReference type="PROSITE" id="PS51722">
    <property type="entry name" value="G_TR_2"/>
    <property type="match status" value="1"/>
</dbReference>
<organism>
    <name type="scientific">Alcanivorax borkumensis (strain ATCC 700651 / DSM 11573 / NCIMB 13689 / SK2)</name>
    <dbReference type="NCBI Taxonomy" id="393595"/>
    <lineage>
        <taxon>Bacteria</taxon>
        <taxon>Pseudomonadati</taxon>
        <taxon>Pseudomonadota</taxon>
        <taxon>Gammaproteobacteria</taxon>
        <taxon>Oceanospirillales</taxon>
        <taxon>Alcanivoracaceae</taxon>
        <taxon>Alcanivorax</taxon>
    </lineage>
</organism>
<sequence>MARKTPLNRYRNIGICAHVDAGKTTTTERILFYTGVSHKIGEVHDGAATMDWMEQEQERGITITSAATTTFWQGMDQQYDQHRINIIDTPGHVDFTIEVERSLRVLDGAVVVFCGSSGVEPQSETVWRQANKYEVPRIVFVNKMDRAGADFDSVCNQIRKRLGASVVPIQYNIGAEDNFKGVVDLIRMKAIFWNEEDMGMTYEEKDIPDDIKDRCDELREQMTEAAAEGSEELMEKYLEEGDLSNDEIKAGLRQQVLANEIVLGLCGSAFKNKGVQALLDAVIEFLPAPDEVKAIQGVLPDGETVEARKSSDDEPFSALAFKIATDPFVGSLTFIRVYSGVLNSGDSVLNSVREKKERVGRLLQMHANSREEIKEVLAGDIAACVGMKDVTTGDTLCDLKNPIVLERMEFPEPVISVAVEPKSKADQEKMGLALGRLAQEDPSFRVKTDEETGQTIISGMGELHLDILVDRMRREFKVEANIGAPQVAYRETFTRGADVDGKFVKQSGGRGQYGHVKVKFEPIDRDEEFQFEEQIHGGSVPKEYFGAVQKGIDEQLQAGVLAGYPILGVKATLYDGSYHEVDSNENAFRMAGALAVKNAAKEAGAVLLEPIMKVEAVTPEDYMGDVMGDLNRRRGIVQGMEDTMAGKIIRAEVPLSEMFGYATDLRSMSQGRASYSMEFLKYAEAPKNIADEVISGKKS</sequence>
<accession>Q0VSL8</accession>
<evidence type="ECO:0000255" key="1">
    <source>
        <dbReference type="HAMAP-Rule" id="MF_00054"/>
    </source>
</evidence>